<evidence type="ECO:0000255" key="1"/>
<evidence type="ECO:0000255" key="2">
    <source>
        <dbReference type="PROSITE-ProRule" id="PRU00498"/>
    </source>
</evidence>
<evidence type="ECO:0000269" key="3">
    <source>
    </source>
</evidence>
<evidence type="ECO:0000269" key="4">
    <source>
    </source>
</evidence>
<evidence type="ECO:0000269" key="5">
    <source>
    </source>
</evidence>
<evidence type="ECO:0000303" key="6">
    <source>
    </source>
</evidence>
<evidence type="ECO:0000303" key="7">
    <source>
    </source>
</evidence>
<evidence type="ECO:0000305" key="8"/>
<evidence type="ECO:0000312" key="9">
    <source>
        <dbReference type="Araport" id="AT5G43510"/>
    </source>
</evidence>
<evidence type="ECO:0000312" key="10">
    <source>
        <dbReference type="EMBL" id="BAA97430.1"/>
    </source>
</evidence>
<evidence type="ECO:0007744" key="11">
    <source>
        <dbReference type="PDB" id="5Y9W"/>
    </source>
</evidence>
<evidence type="ECO:0007744" key="12">
    <source>
        <dbReference type="PDB" id="5YAH"/>
    </source>
</evidence>
<evidence type="ECO:0007829" key="13">
    <source>
        <dbReference type="PDB" id="5Y9W"/>
    </source>
</evidence>
<proteinExistence type="evidence at protein level"/>
<reference key="1">
    <citation type="journal article" date="2000" name="DNA Res.">
        <title>Structural analysis of Arabidopsis thaliana chromosome 5. X. Sequence features of the regions of 3,076,755 bp covered by sixty P1 and TAC clones.</title>
        <authorList>
            <person name="Sato S."/>
            <person name="Nakamura Y."/>
            <person name="Kaneko T."/>
            <person name="Katoh T."/>
            <person name="Asamizu E."/>
            <person name="Kotani H."/>
            <person name="Tabata S."/>
        </authorList>
    </citation>
    <scope>NUCLEOTIDE SEQUENCE [LARGE SCALE GENOMIC DNA]</scope>
    <source>
        <strain>cv. Columbia</strain>
    </source>
</reference>
<reference key="2">
    <citation type="journal article" date="2017" name="Plant J.">
        <title>Araport11: a complete reannotation of the Arabidopsis thaliana reference genome.</title>
        <authorList>
            <person name="Cheng C.Y."/>
            <person name="Krishnakumar V."/>
            <person name="Chan A.P."/>
            <person name="Thibaud-Nissen F."/>
            <person name="Schobel S."/>
            <person name="Town C.D."/>
        </authorList>
    </citation>
    <scope>GENOME REANNOTATION</scope>
    <source>
        <strain>cv. Columbia</strain>
    </source>
</reference>
<reference key="3">
    <citation type="journal article" date="2005" name="Plant Physiol.">
        <title>Genome organization of more than 300 defensin-like genes in Arabidopsis.</title>
        <authorList>
            <person name="Silverstein K.A.T."/>
            <person name="Graham M.A."/>
            <person name="Paape T.D."/>
            <person name="VandenBosch K.A."/>
        </authorList>
    </citation>
    <scope>NUCLEOTIDE SEQUENCE [MRNA] OF 14-75</scope>
    <scope>GENE FAMILY</scope>
</reference>
<reference key="4">
    <citation type="journal article" date="2012" name="PLoS Biol.">
        <title>A species-specific cluster of defensin-like genes encodes diffusible pollen tube attractants in Arabidopsis.</title>
        <authorList>
            <person name="Takeuchi H."/>
            <person name="Higashiyama T."/>
        </authorList>
    </citation>
    <scope>FUNCTION</scope>
    <scope>GENE FAMILY</scope>
    <scope>NOMENCLATURE</scope>
    <scope>TISSUE SPECIFICITY</scope>
    <scope>SUBCELLULAR LOCATION</scope>
</reference>
<reference key="5">
    <citation type="journal article" date="2016" name="Nature">
        <title>A receptor heteromer mediates the male perception of female attractants in plants.</title>
        <authorList>
            <person name="Wang T."/>
            <person name="Liang L."/>
            <person name="Xue Y."/>
            <person name="Jia P.F."/>
            <person name="Chen W."/>
            <person name="Zhang M.X."/>
            <person name="Wang Y.C."/>
            <person name="Li H.J."/>
            <person name="Yang W.C."/>
        </authorList>
    </citation>
    <scope>FUNCTION</scope>
    <scope>INTERACTION WITH MDIS1; MIK1; MIK2 AND TDR/PXY</scope>
</reference>
<reference key="6">
    <citation type="journal article" date="2017" name="Nat. Commun.">
        <title>Structural basis for receptor recognition of pollen tube attraction peptides.</title>
        <authorList>
            <person name="Zhang X."/>
            <person name="Liu W."/>
            <person name="Nagae T.T."/>
            <person name="Takeuchi H."/>
            <person name="Zhang H."/>
            <person name="Han Z."/>
            <person name="Higashiyama T."/>
            <person name="Chai J."/>
        </authorList>
    </citation>
    <scope>X-RAY CRYSTALLOGRAPHY (1.85 ANGSTROMS) OF 20-90</scope>
    <scope>FUNCTION</scope>
    <scope>DISULFIDE BONDS</scope>
    <scope>INTERACTION WITH PRK6</scope>
    <scope>MUTAGENESIS OF ARG-67; ARG-68; LYS-70; ARG-73; ARG-79 AND ARG-83</scope>
</reference>
<name>LUR12_ARATH</name>
<sequence length="90" mass="10289">MKLPIIFLTLLIFVSSCTSTLINGSSDEERTYSFSPTTSPFDPRSLNQELKIGRIGYCFDCARACMRRGKYIRTCSFERKLCRCSISDIK</sequence>
<feature type="signal peptide" evidence="1">
    <location>
        <begin position="1"/>
        <end position="19"/>
    </location>
</feature>
<feature type="chain" id="PRO_0000379705" description="Protein LURE 1.2">
    <location>
        <begin position="20"/>
        <end position="90"/>
    </location>
</feature>
<feature type="region of interest" description="PRK6 binding" evidence="5 11 12">
    <location>
        <begin position="67"/>
        <end position="87"/>
    </location>
</feature>
<feature type="glycosylation site" description="N-linked (GlcNAc...) asparagine" evidence="2">
    <location>
        <position position="23"/>
    </location>
</feature>
<feature type="disulfide bond" evidence="5 11 12">
    <location>
        <begin position="58"/>
        <end position="75"/>
    </location>
</feature>
<feature type="disulfide bond" evidence="5 11 12">
    <location>
        <begin position="61"/>
        <end position="82"/>
    </location>
</feature>
<feature type="disulfide bond" evidence="5 11 12">
    <location>
        <begin position="65"/>
        <end position="84"/>
    </location>
</feature>
<feature type="mutagenesis site" description="Compromised interaction with PRK6; when associated with G-68 and G-70." evidence="5">
    <original>R</original>
    <variation>G</variation>
    <location>
        <position position="67"/>
    </location>
</feature>
<feature type="mutagenesis site" description="Reduced interaction with PRK6. Normal pollen tube attraction." evidence="5">
    <original>R</original>
    <variation>A</variation>
    <location>
        <position position="68"/>
    </location>
</feature>
<feature type="mutagenesis site" description="Compromised interaction with PRK6; when associated with G-67 and G-70." evidence="5">
    <original>R</original>
    <variation>G</variation>
    <location>
        <position position="68"/>
    </location>
</feature>
<feature type="mutagenesis site" description="Compromised interaction with PRK6; when associated with G-67 and G-68." evidence="5">
    <original>K</original>
    <variation>G</variation>
    <location>
        <position position="70"/>
    </location>
</feature>
<feature type="mutagenesis site" description="Reduced interaction with PRK6. Normal pollen tube attraction." evidence="5">
    <original>R</original>
    <variation>A</variation>
    <location>
        <position position="73"/>
    </location>
</feature>
<feature type="mutagenesis site" description="Reduced interaction with PRK6. Normal pollen tube attraction." evidence="5">
    <original>R</original>
    <variation>A</variation>
    <location>
        <position position="79"/>
    </location>
</feature>
<feature type="mutagenesis site" description="Compromised interaction with PRK6. Reduced pollen tube attraction." evidence="5">
    <original>R</original>
    <variation>A</variation>
    <location>
        <position position="83"/>
    </location>
</feature>
<feature type="helix" evidence="13">
    <location>
        <begin position="54"/>
        <end position="67"/>
    </location>
</feature>
<feature type="strand" evidence="13">
    <location>
        <begin position="72"/>
        <end position="76"/>
    </location>
</feature>
<feature type="turn" evidence="13">
    <location>
        <begin position="77"/>
        <end position="80"/>
    </location>
</feature>
<feature type="strand" evidence="13">
    <location>
        <begin position="81"/>
        <end position="84"/>
    </location>
</feature>
<organism>
    <name type="scientific">Arabidopsis thaliana</name>
    <name type="common">Mouse-ear cress</name>
    <dbReference type="NCBI Taxonomy" id="3702"/>
    <lineage>
        <taxon>Eukaryota</taxon>
        <taxon>Viridiplantae</taxon>
        <taxon>Streptophyta</taxon>
        <taxon>Embryophyta</taxon>
        <taxon>Tracheophyta</taxon>
        <taxon>Spermatophyta</taxon>
        <taxon>Magnoliopsida</taxon>
        <taxon>eudicotyledons</taxon>
        <taxon>Gunneridae</taxon>
        <taxon>Pentapetalae</taxon>
        <taxon>rosids</taxon>
        <taxon>malvids</taxon>
        <taxon>Brassicales</taxon>
        <taxon>Brassicaceae</taxon>
        <taxon>Camelineae</taxon>
        <taxon>Arabidopsis</taxon>
    </lineage>
</organism>
<gene>
    <name evidence="7" type="primary">LURE1.2</name>
    <name evidence="7" type="synonym">CRP810_1.2</name>
    <name evidence="9" type="ordered locus">At5g43510</name>
    <name evidence="10" type="ORF">MWF20.23</name>
</gene>
<dbReference type="EMBL" id="AB025638">
    <property type="protein sequence ID" value="BAA97430.1"/>
    <property type="status" value="ALT_SEQ"/>
    <property type="molecule type" value="Genomic_DNA"/>
</dbReference>
<dbReference type="EMBL" id="CP002688">
    <property type="protein sequence ID" value="AED94973.1"/>
    <property type="molecule type" value="Genomic_DNA"/>
</dbReference>
<dbReference type="EMBL" id="AY803254">
    <property type="protein sequence ID" value="AAX39295.1"/>
    <property type="molecule type" value="mRNA"/>
</dbReference>
<dbReference type="RefSeq" id="NP_001078701.1">
    <property type="nucleotide sequence ID" value="NM_001085232.2"/>
</dbReference>
<dbReference type="PDB" id="5Y9W">
    <property type="method" value="X-ray"/>
    <property type="resolution" value="1.85 A"/>
    <property type="chains" value="C=20-90"/>
</dbReference>
<dbReference type="PDB" id="5YAH">
    <property type="method" value="X-ray"/>
    <property type="resolution" value="2.10 A"/>
    <property type="chains" value="C=20-90"/>
</dbReference>
<dbReference type="PDBsum" id="5Y9W"/>
<dbReference type="PDBsum" id="5YAH"/>
<dbReference type="SMR" id="Q4VP08"/>
<dbReference type="DIP" id="DIP-61970N"/>
<dbReference type="FunCoup" id="Q4VP08">
    <property type="interactions" value="4"/>
</dbReference>
<dbReference type="IntAct" id="Q4VP08">
    <property type="interactions" value="4"/>
</dbReference>
<dbReference type="STRING" id="3702.Q4VP08"/>
<dbReference type="GlyCosmos" id="Q4VP08">
    <property type="glycosylation" value="1 site, No reported glycans"/>
</dbReference>
<dbReference type="GlyGen" id="Q4VP08">
    <property type="glycosylation" value="1 site"/>
</dbReference>
<dbReference type="PaxDb" id="3702-AT5G43510.2"/>
<dbReference type="EnsemblPlants" id="AT5G43510.2">
    <property type="protein sequence ID" value="AT5G43510.2"/>
    <property type="gene ID" value="AT5G43510"/>
</dbReference>
<dbReference type="GeneID" id="834371"/>
<dbReference type="Gramene" id="AT5G43510.2">
    <property type="protein sequence ID" value="AT5G43510.2"/>
    <property type="gene ID" value="AT5G43510"/>
</dbReference>
<dbReference type="KEGG" id="ath:AT5G43510"/>
<dbReference type="Araport" id="AT5G43510"/>
<dbReference type="TAIR" id="AT5G43510">
    <property type="gene designation" value="LURE1.2"/>
</dbReference>
<dbReference type="HOGENOM" id="CLU_180309_0_0_1"/>
<dbReference type="InParanoid" id="Q4VP08"/>
<dbReference type="PhylomeDB" id="Q4VP08"/>
<dbReference type="PRO" id="PR:Q4VP08"/>
<dbReference type="Proteomes" id="UP000006548">
    <property type="component" value="Chromosome 5"/>
</dbReference>
<dbReference type="ExpressionAtlas" id="Q4VP08">
    <property type="expression patterns" value="baseline"/>
</dbReference>
<dbReference type="GO" id="GO:0005576">
    <property type="term" value="C:extracellular region"/>
    <property type="evidence" value="ECO:0007669"/>
    <property type="project" value="UniProtKB-SubCell"/>
</dbReference>
<dbReference type="GO" id="GO:0010183">
    <property type="term" value="P:pollen tube guidance"/>
    <property type="evidence" value="ECO:0000314"/>
    <property type="project" value="TAIR"/>
</dbReference>
<dbReference type="CDD" id="cd21804">
    <property type="entry name" value="DEFL_AtLURE1-like"/>
    <property type="match status" value="1"/>
</dbReference>
<dbReference type="InterPro" id="IPR047497">
    <property type="entry name" value="DEFL_AtLURE1-like"/>
</dbReference>
<keyword id="KW-0002">3D-structure</keyword>
<keyword id="KW-1015">Disulfide bond</keyword>
<keyword id="KW-0325">Glycoprotein</keyword>
<keyword id="KW-1185">Reference proteome</keyword>
<keyword id="KW-0964">Secreted</keyword>
<keyword id="KW-0732">Signal</keyword>
<protein>
    <recommendedName>
        <fullName evidence="7">Protein LURE 1.2</fullName>
        <shortName evidence="7">AtLURE1.2</shortName>
    </recommendedName>
    <alternativeName>
        <fullName evidence="7">Cysteine-Rich Peptide 810_1.2</fullName>
        <shortName evidence="7">CRP810_1.2</shortName>
    </alternativeName>
    <alternativeName>
        <fullName evidence="6">Defensin-like protein 213</fullName>
    </alternativeName>
</protein>
<comment type="function">
    <text evidence="3 4 5">Pollen tube attractants guiding pollen tubes to the ovular micropyle (PubMed:23271953, PubMed:29109411). Attracts specifically pollen tubes from A.thaliana, but not those from A.lyrata (PubMed:23271953). Triggers endocytosis of MDIS1 in the pollen tube tip (PubMed:26863186).</text>
</comment>
<comment type="subunit">
    <text evidence="4 5">Interacts with MDIS1, MIK1, MIK2 and TDR/PXY, but not with MDIS2 (PubMed:26863186). Binds to PRK6 LRRs (PubMed:29109411).</text>
</comment>
<comment type="interaction">
    <interactant intactId="EBI-16196186">
        <id>Q4VP08</id>
    </interactant>
    <interactant intactId="EBI-16196163">
        <id>C0LGU7</id>
        <label>MDIS1</label>
    </interactant>
    <organismsDiffer>false</organismsDiffer>
    <experiments>5</experiments>
</comment>
<comment type="interaction">
    <interactant intactId="EBI-16196186">
        <id>Q4VP08</id>
    </interactant>
    <interactant intactId="EBI-16196224">
        <id>Q9M0G7</id>
        <label>MIK1</label>
    </interactant>
    <organismsDiffer>false</organismsDiffer>
    <experiments>4</experiments>
</comment>
<comment type="interaction">
    <interactant intactId="EBI-16196186">
        <id>Q4VP08</id>
    </interactant>
    <interactant intactId="EBI-2270407">
        <id>Q8VZG8</id>
        <label>MIK2</label>
    </interactant>
    <organismsDiffer>false</organismsDiffer>
    <experiments>4</experiments>
</comment>
<comment type="subcellular location">
    <subcellularLocation>
        <location evidence="3">Secreted</location>
    </subcellularLocation>
    <text evidence="3">found at the micropylar end of the female gametophyte, possibly at the filiform apparatus of the synergid cell. Difuses to the surface of the funiculus of the ovule through the micropyle.</text>
</comment>
<comment type="tissue specificity">
    <text evidence="3">Expressed in the pistil. Detected exclusively in the synergid cells.</text>
</comment>
<comment type="similarity">
    <text evidence="8">Belongs to the DEFL family.</text>
</comment>
<comment type="caution">
    <text evidence="8">Lacks 1 of the 4 disulfide bonds, which are conserved features of the family.</text>
</comment>
<comment type="sequence caution" evidence="8">
    <conflict type="erroneous gene model prediction">
        <sequence resource="EMBL-CDS" id="BAA97430"/>
    </conflict>
</comment>
<accession>Q4VP08</accession>
<accession>Q9LSW1</accession>